<evidence type="ECO:0000250" key="1"/>
<evidence type="ECO:0000305" key="2"/>
<dbReference type="EC" id="4.2.1.33"/>
<dbReference type="EMBL" id="AE005672">
    <property type="protein sequence ID" value="AAK75360.1"/>
    <property type="molecule type" value="Genomic_DNA"/>
</dbReference>
<dbReference type="PIR" id="G95145">
    <property type="entry name" value="G95145"/>
</dbReference>
<dbReference type="RefSeq" id="WP_000929153.1">
    <property type="nucleotide sequence ID" value="NZ_CP155539.1"/>
</dbReference>
<dbReference type="SMR" id="Q97QF9"/>
<dbReference type="PaxDb" id="170187-SP_1255"/>
<dbReference type="EnsemblBacteria" id="AAK75360">
    <property type="protein sequence ID" value="AAK75360"/>
    <property type="gene ID" value="SP_1255"/>
</dbReference>
<dbReference type="KEGG" id="spn:SP_1255"/>
<dbReference type="eggNOG" id="COG0066">
    <property type="taxonomic scope" value="Bacteria"/>
</dbReference>
<dbReference type="PhylomeDB" id="Q97QF9"/>
<dbReference type="BioCyc" id="SPNE170187:G1FZB-1269-MONOMER"/>
<dbReference type="UniPathway" id="UPA00048">
    <property type="reaction ID" value="UER00071"/>
</dbReference>
<dbReference type="Proteomes" id="UP000000585">
    <property type="component" value="Chromosome"/>
</dbReference>
<dbReference type="GO" id="GO:0009316">
    <property type="term" value="C:3-isopropylmalate dehydratase complex"/>
    <property type="evidence" value="ECO:0007669"/>
    <property type="project" value="InterPro"/>
</dbReference>
<dbReference type="GO" id="GO:0003861">
    <property type="term" value="F:3-isopropylmalate dehydratase activity"/>
    <property type="evidence" value="ECO:0007669"/>
    <property type="project" value="UniProtKB-EC"/>
</dbReference>
<dbReference type="GO" id="GO:0009098">
    <property type="term" value="P:L-leucine biosynthetic process"/>
    <property type="evidence" value="ECO:0007669"/>
    <property type="project" value="UniProtKB-UniPathway"/>
</dbReference>
<dbReference type="Gene3D" id="3.20.19.10">
    <property type="entry name" value="Aconitase, domain 4"/>
    <property type="match status" value="1"/>
</dbReference>
<dbReference type="InterPro" id="IPR004431">
    <property type="entry name" value="3-IsopropMal_deHydase_ssu"/>
</dbReference>
<dbReference type="InterPro" id="IPR015928">
    <property type="entry name" value="Aconitase/3IPM_dehydase_swvl"/>
</dbReference>
<dbReference type="InterPro" id="IPR000573">
    <property type="entry name" value="AconitaseA/IPMdHydase_ssu_swvl"/>
</dbReference>
<dbReference type="InterPro" id="IPR050075">
    <property type="entry name" value="LeuD"/>
</dbReference>
<dbReference type="NCBIfam" id="TIGR00171">
    <property type="entry name" value="leuD"/>
    <property type="match status" value="1"/>
</dbReference>
<dbReference type="PANTHER" id="PTHR43345:SF5">
    <property type="entry name" value="3-ISOPROPYLMALATE DEHYDRATASE SMALL SUBUNIT"/>
    <property type="match status" value="1"/>
</dbReference>
<dbReference type="PANTHER" id="PTHR43345">
    <property type="entry name" value="3-ISOPROPYLMALATE DEHYDRATASE SMALL SUBUNIT 2-RELATED-RELATED"/>
    <property type="match status" value="1"/>
</dbReference>
<dbReference type="Pfam" id="PF00694">
    <property type="entry name" value="Aconitase_C"/>
    <property type="match status" value="1"/>
</dbReference>
<dbReference type="SUPFAM" id="SSF52016">
    <property type="entry name" value="LeuD/IlvD-like"/>
    <property type="match status" value="1"/>
</dbReference>
<feature type="chain" id="PRO_0000141894" description="Putative 3-isopropylmalate dehydratase small subunit">
    <location>
        <begin position="1"/>
        <end position="119"/>
    </location>
</feature>
<proteinExistence type="uncertain"/>
<organism>
    <name type="scientific">Streptococcus pneumoniae serotype 4 (strain ATCC BAA-334 / TIGR4)</name>
    <dbReference type="NCBI Taxonomy" id="170187"/>
    <lineage>
        <taxon>Bacteria</taxon>
        <taxon>Bacillati</taxon>
        <taxon>Bacillota</taxon>
        <taxon>Bacilli</taxon>
        <taxon>Lactobacillales</taxon>
        <taxon>Streptococcaceae</taxon>
        <taxon>Streptococcus</taxon>
    </lineage>
</organism>
<accession>Q97QF9</accession>
<keyword id="KW-0028">Amino-acid biosynthesis</keyword>
<keyword id="KW-0100">Branched-chain amino acid biosynthesis</keyword>
<keyword id="KW-0432">Leucine biosynthesis</keyword>
<keyword id="KW-0456">Lyase</keyword>
<keyword id="KW-1185">Reference proteome</keyword>
<gene>
    <name type="primary">leuD</name>
    <name type="ordered locus">SP_1255</name>
</gene>
<reference key="1">
    <citation type="journal article" date="2001" name="Science">
        <title>Complete genome sequence of a virulent isolate of Streptococcus pneumoniae.</title>
        <authorList>
            <person name="Tettelin H."/>
            <person name="Nelson K.E."/>
            <person name="Paulsen I.T."/>
            <person name="Eisen J.A."/>
            <person name="Read T.D."/>
            <person name="Peterson S.N."/>
            <person name="Heidelberg J.F."/>
            <person name="DeBoy R.T."/>
            <person name="Haft D.H."/>
            <person name="Dodson R.J."/>
            <person name="Durkin A.S."/>
            <person name="Gwinn M.L."/>
            <person name="Kolonay J.F."/>
            <person name="Nelson W.C."/>
            <person name="Peterson J.D."/>
            <person name="Umayam L.A."/>
            <person name="White O."/>
            <person name="Salzberg S.L."/>
            <person name="Lewis M.R."/>
            <person name="Radune D."/>
            <person name="Holtzapple E.K."/>
            <person name="Khouri H.M."/>
            <person name="Wolf A.M."/>
            <person name="Utterback T.R."/>
            <person name="Hansen C.L."/>
            <person name="McDonald L.A."/>
            <person name="Feldblyum T.V."/>
            <person name="Angiuoli S.V."/>
            <person name="Dickinson T."/>
            <person name="Hickey E.K."/>
            <person name="Holt I.E."/>
            <person name="Loftus B.J."/>
            <person name="Yang F."/>
            <person name="Smith H.O."/>
            <person name="Venter J.C."/>
            <person name="Dougherty B.A."/>
            <person name="Morrison D.A."/>
            <person name="Hollingshead S.K."/>
            <person name="Fraser C.M."/>
        </authorList>
    </citation>
    <scope>NUCLEOTIDE SEQUENCE [LARGE SCALE GENOMIC DNA]</scope>
    <source>
        <strain>ATCC BAA-334 / TIGR4</strain>
    </source>
</reference>
<sequence length="119" mass="13691">MAGSSREYAAWALADYGFKVVIAGSFGDIHYNNELNNGMLPIVQPREVREKLAQLKPTDQVTVDLEQQKIISPVEEFTFEIDSEWKHKLLNSLDDIGITLQYEELIAAYEKQRPAYWQD</sequence>
<comment type="function">
    <text evidence="1">Catalyzes the isomerization between 2-isopropylmalate and 3-isopropylmalate, via the formation of 2-isopropylmaleate.</text>
</comment>
<comment type="catalytic activity">
    <reaction>
        <text>(2R,3S)-3-isopropylmalate = (2S)-2-isopropylmalate</text>
        <dbReference type="Rhea" id="RHEA:32287"/>
        <dbReference type="ChEBI" id="CHEBI:1178"/>
        <dbReference type="ChEBI" id="CHEBI:35121"/>
        <dbReference type="EC" id="4.2.1.33"/>
    </reaction>
</comment>
<comment type="pathway">
    <text>Amino-acid biosynthesis; L-leucine biosynthesis; L-leucine from 3-methyl-2-oxobutanoate: step 2/4.</text>
</comment>
<comment type="subunit">
    <text evidence="1">Heterodimer of LeuC and LeuD.</text>
</comment>
<comment type="similarity">
    <text evidence="2">Belongs to the LeuD family. LeuD type 1 subfamily.</text>
</comment>
<comment type="caution">
    <text evidence="2">The N-terminal region seems to be truncated when compared to orthologs.</text>
</comment>
<comment type="caution">
    <text evidence="2">Could be the product of a pseudogene.</text>
</comment>
<name>LEUD_STRPN</name>
<protein>
    <recommendedName>
        <fullName>Putative 3-isopropylmalate dehydratase small subunit</fullName>
        <ecNumber>4.2.1.33</ecNumber>
    </recommendedName>
    <alternativeName>
        <fullName>Alpha-IPM isomerase</fullName>
        <shortName>IPMI</shortName>
    </alternativeName>
    <alternativeName>
        <fullName>Isopropylmalate isomerase</fullName>
    </alternativeName>
</protein>